<dbReference type="EMBL" id="X76993">
    <property type="protein sequence ID" value="CAA54297.1"/>
    <property type="molecule type" value="Genomic_RNA"/>
</dbReference>
<dbReference type="RefSeq" id="NP_620038.1">
    <property type="nucleotide sequence ID" value="NC_003671.1"/>
</dbReference>
<dbReference type="KEGG" id="vg:991139"/>
<dbReference type="Proteomes" id="UP000000412">
    <property type="component" value="Genome"/>
</dbReference>
<dbReference type="GO" id="GO:0044219">
    <property type="term" value="C:host cell plasmodesma"/>
    <property type="evidence" value="ECO:0007669"/>
    <property type="project" value="UniProtKB-SubCell"/>
</dbReference>
<dbReference type="GO" id="GO:0046740">
    <property type="term" value="P:transport of virus in host, cell to cell"/>
    <property type="evidence" value="ECO:0007669"/>
    <property type="project" value="UniProtKB-KW"/>
</dbReference>
<dbReference type="InterPro" id="IPR000603">
    <property type="entry name" value="MPV"/>
</dbReference>
<dbReference type="Pfam" id="PF00803">
    <property type="entry name" value="3A"/>
    <property type="match status" value="1"/>
</dbReference>
<organism>
    <name type="scientific">Olive latent virus 2 (isolate Italy)</name>
    <name type="common">OLV-2</name>
    <dbReference type="NCBI Taxonomy" id="650489"/>
    <lineage>
        <taxon>Viruses</taxon>
        <taxon>Riboviria</taxon>
        <taxon>Orthornavirae</taxon>
        <taxon>Kitrinoviricota</taxon>
        <taxon>Alsuviricetes</taxon>
        <taxon>Martellivirales</taxon>
        <taxon>Bromoviridae</taxon>
        <taxon>Oleavirus</taxon>
        <taxon>Olive latent virus 2</taxon>
    </lineage>
</organism>
<proteinExistence type="inferred from homology"/>
<comment type="function">
    <text evidence="1">Transports viral genome to neighboring plant cells directly through plasmosdesmata, without any budding. The movement protein allows efficient cell to cell propagation, by bypassing the host cell wall barrier. Acts by forming a tubular structure at the host plasmodesmata, enlarging it enough to allow free passage of virion capsids (By similarity).</text>
</comment>
<comment type="subcellular location">
    <subcellularLocation>
        <location evidence="1">Host cell junction</location>
        <location evidence="1">Host plasmodesma</location>
    </subcellularLocation>
    <text evidence="1">Assembles into long tubular structures at the surface of the infected protoplast.</text>
</comment>
<reference key="1">
    <citation type="journal article" date="1995" name="J. Gen. Virol.">
        <title>The nucleotide sequence of RNA3 and RNA4 of olive latent virus 2.</title>
        <authorList>
            <person name="Grieco F."/>
            <person name="Martelli G.P."/>
            <person name="Savino V."/>
        </authorList>
    </citation>
    <scope>NUCLEOTIDE SEQUENCE [GENOMIC RNA]</scope>
</reference>
<reference key="2">
    <citation type="submission" date="1999-02" db="EMBL/GenBank/DDBJ databases">
        <authorList>
            <person name="Grieco F."/>
        </authorList>
    </citation>
    <scope>SEQUENCE REVISION</scope>
</reference>
<sequence>MAGLWRSNSTLDVERGRNRTQTETVQTVPRQAQGILELLSSPAAREALQGSDFARWRGVPVSPAGGYFELAPLRSVNTFARGLRSVFGGSTSRREAYIPQHGFYRLNYVLVAVVPHVEHSDPGEVTVQLVENTNPTRAVDGQELTARLADGSFVFAAAPTYDIVLEQAPILVEGESAGVVQRMFGIRTSVSGSLTTGSVVSVYPIWSAEFPIQGATFNHVAPSIVHIDRFNRSVAFEIDVLRRRFSLMRPLHLARSRESFQVGRMSLDVARPSVVRPPPVDPQAEGGIHVNSPTSEQSQGEDRVPRAGLASGTSVGEGANHEFLSGAVKSTAPVRQT</sequence>
<feature type="chain" id="PRO_0000402412" description="Movement protein">
    <location>
        <begin position="1"/>
        <end position="337"/>
    </location>
</feature>
<feature type="region of interest" description="Disordered" evidence="2">
    <location>
        <begin position="1"/>
        <end position="24"/>
    </location>
</feature>
<feature type="region of interest" description="Disordered" evidence="2">
    <location>
        <begin position="273"/>
        <end position="337"/>
    </location>
</feature>
<feature type="compositionally biased region" description="Polar residues" evidence="2">
    <location>
        <begin position="1"/>
        <end position="11"/>
    </location>
</feature>
<organismHost>
    <name type="scientific">Olea</name>
    <dbReference type="NCBI Taxonomy" id="4145"/>
</organismHost>
<accession>Q9YNE3</accession>
<evidence type="ECO:0000250" key="1"/>
<evidence type="ECO:0000256" key="2">
    <source>
        <dbReference type="SAM" id="MobiDB-lite"/>
    </source>
</evidence>
<keyword id="KW-1031">Host cell junction</keyword>
<keyword id="KW-1185">Reference proteome</keyword>
<keyword id="KW-0813">Transport</keyword>
<keyword id="KW-0916">Viral movement protein</keyword>
<name>MVP_OLV2I</name>
<protein>
    <recommendedName>
        <fullName>Movement protein</fullName>
        <shortName>MP</shortName>
    </recommendedName>
    <alternativeName>
        <fullName>Protein 3A</fullName>
    </alternativeName>
</protein>
<gene>
    <name type="ORF">ORF3a</name>
</gene>